<sequence>MSIKLINIGFGNIVSANRLVAIVSPESAPIKRIIQEARDRGMLIDATYGRRTRAVIITDSDHVILSAVQPETVAHRLSTKEEVVVEDDE</sequence>
<evidence type="ECO:0000255" key="1">
    <source>
        <dbReference type="HAMAP-Rule" id="MF_01503"/>
    </source>
</evidence>
<proteinExistence type="inferred from homology"/>
<comment type="similarity">
    <text evidence="1">Belongs to the RemA family.</text>
</comment>
<accession>Q0SS72</accession>
<organism>
    <name type="scientific">Clostridium perfringens (strain SM101 / Type A)</name>
    <dbReference type="NCBI Taxonomy" id="289380"/>
    <lineage>
        <taxon>Bacteria</taxon>
        <taxon>Bacillati</taxon>
        <taxon>Bacillota</taxon>
        <taxon>Clostridia</taxon>
        <taxon>Eubacteriales</taxon>
        <taxon>Clostridiaceae</taxon>
        <taxon>Clostridium</taxon>
    </lineage>
</organism>
<dbReference type="EMBL" id="CP000312">
    <property type="protein sequence ID" value="ABG85841.1"/>
    <property type="molecule type" value="Genomic_DNA"/>
</dbReference>
<dbReference type="SMR" id="Q0SS72"/>
<dbReference type="KEGG" id="cpr:CPR_1720"/>
<dbReference type="BioCyc" id="CPER289380:GI76-1731-MONOMER"/>
<dbReference type="Proteomes" id="UP000001824">
    <property type="component" value="Chromosome"/>
</dbReference>
<dbReference type="HAMAP" id="MF_01503">
    <property type="entry name" value="RemA"/>
    <property type="match status" value="1"/>
</dbReference>
<dbReference type="InterPro" id="IPR007169">
    <property type="entry name" value="RemA-like"/>
</dbReference>
<dbReference type="NCBIfam" id="NF046064">
    <property type="entry name" value="MtxBflmRegRemA"/>
    <property type="match status" value="1"/>
</dbReference>
<dbReference type="NCBIfam" id="NF003315">
    <property type="entry name" value="PRK04323.1"/>
    <property type="match status" value="1"/>
</dbReference>
<dbReference type="PANTHER" id="PTHR38449:SF1">
    <property type="entry name" value="REGULATORY PROTEIN SSL2874-RELATED"/>
    <property type="match status" value="1"/>
</dbReference>
<dbReference type="PANTHER" id="PTHR38449">
    <property type="entry name" value="REGULATORY PROTEIN TM_1690-RELATED"/>
    <property type="match status" value="1"/>
</dbReference>
<dbReference type="Pfam" id="PF04025">
    <property type="entry name" value="RemA-like"/>
    <property type="match status" value="1"/>
</dbReference>
<protein>
    <recommendedName>
        <fullName evidence="1">Putative regulatory protein CPR_1720</fullName>
    </recommendedName>
</protein>
<feature type="chain" id="PRO_0000294254" description="Putative regulatory protein CPR_1720">
    <location>
        <begin position="1"/>
        <end position="89"/>
    </location>
</feature>
<name>Y1720_CLOPS</name>
<reference key="1">
    <citation type="journal article" date="2006" name="Genome Res.">
        <title>Skewed genomic variability in strains of the toxigenic bacterial pathogen, Clostridium perfringens.</title>
        <authorList>
            <person name="Myers G.S.A."/>
            <person name="Rasko D.A."/>
            <person name="Cheung J.K."/>
            <person name="Ravel J."/>
            <person name="Seshadri R."/>
            <person name="DeBoy R.T."/>
            <person name="Ren Q."/>
            <person name="Varga J."/>
            <person name="Awad M.M."/>
            <person name="Brinkac L.M."/>
            <person name="Daugherty S.C."/>
            <person name="Haft D.H."/>
            <person name="Dodson R.J."/>
            <person name="Madupu R."/>
            <person name="Nelson W.C."/>
            <person name="Rosovitz M.J."/>
            <person name="Sullivan S.A."/>
            <person name="Khouri H."/>
            <person name="Dimitrov G.I."/>
            <person name="Watkins K.L."/>
            <person name="Mulligan S."/>
            <person name="Benton J."/>
            <person name="Radune D."/>
            <person name="Fisher D.J."/>
            <person name="Atkins H.S."/>
            <person name="Hiscox T."/>
            <person name="Jost B.H."/>
            <person name="Billington S.J."/>
            <person name="Songer J.G."/>
            <person name="McClane B.A."/>
            <person name="Titball R.W."/>
            <person name="Rood J.I."/>
            <person name="Melville S.B."/>
            <person name="Paulsen I.T."/>
        </authorList>
    </citation>
    <scope>NUCLEOTIDE SEQUENCE [LARGE SCALE GENOMIC DNA]</scope>
    <source>
        <strain>SM101 / Type A</strain>
    </source>
</reference>
<gene>
    <name type="ordered locus">CPR_1720</name>
</gene>